<comment type="function">
    <text evidence="2">Antagonist of muscle and neuronal nicotinic acetylcholine receptors (nAChR) with highest affinity for neuronal alpha-7/CHRNA7 nAChRs.</text>
</comment>
<comment type="subunit">
    <text evidence="2">Homodimer; non-covalently linked.</text>
</comment>
<comment type="subcellular location">
    <subcellularLocation>
        <location evidence="2">Secreted</location>
    </subcellularLocation>
</comment>
<comment type="tissue specificity">
    <text evidence="4">Expressed by the venom gland.</text>
</comment>
<comment type="similarity">
    <text evidence="4">Belongs to the three-finger toxin family. Short-chain subfamily. Orphan group VIII (haditoxin) sub-subfamily.</text>
</comment>
<proteinExistence type="inferred from homology"/>
<evidence type="ECO:0000250" key="1"/>
<evidence type="ECO:0000250" key="2">
    <source>
        <dbReference type="UniProtKB" id="A8N286"/>
    </source>
</evidence>
<evidence type="ECO:0000250" key="3">
    <source>
        <dbReference type="UniProtKB" id="P60301"/>
    </source>
</evidence>
<evidence type="ECO:0000305" key="4"/>
<name>3SO8_NAJAT</name>
<accession>Q9DEQ3</accession>
<sequence>MKTLLLTLVVVTMVCMDLGYTTICYNHLSRTPETTEICPDSWYFCYKISLADGNDVRIKRGCTFTCPELRPTGKYVYCCRRDKCNQ</sequence>
<feature type="signal peptide" evidence="1">
    <location>
        <begin position="1"/>
        <end position="21"/>
    </location>
</feature>
<feature type="chain" id="PRO_0000035472" description="Neurotoxin homolog NL1">
    <location>
        <begin position="22"/>
        <end position="86"/>
    </location>
</feature>
<feature type="disulfide bond" evidence="3">
    <location>
        <begin position="24"/>
        <end position="45"/>
    </location>
</feature>
<feature type="disulfide bond" evidence="3">
    <location>
        <begin position="38"/>
        <end position="62"/>
    </location>
</feature>
<feature type="disulfide bond" evidence="3">
    <location>
        <begin position="66"/>
        <end position="78"/>
    </location>
</feature>
<feature type="disulfide bond" evidence="3">
    <location>
        <begin position="79"/>
        <end position="84"/>
    </location>
</feature>
<reference key="1">
    <citation type="submission" date="1998-01" db="EMBL/GenBank/DDBJ databases">
        <title>cDNA cloning of neurotoxin homologue from naja naja atra.</title>
        <authorList>
            <person name="Qian Y.-C."/>
            <person name="Fang C.-Y."/>
            <person name="Gong Y."/>
            <person name="Yang S.-L."/>
        </authorList>
    </citation>
    <scope>NUCLEOTIDE SEQUENCE [MRNA]</scope>
    <source>
        <tissue>Venom gland</tissue>
    </source>
</reference>
<dbReference type="EMBL" id="AJ001186">
    <property type="protein sequence ID" value="CAC08183.1"/>
    <property type="molecule type" value="mRNA"/>
</dbReference>
<dbReference type="SMR" id="Q9DEQ3"/>
<dbReference type="GO" id="GO:0005576">
    <property type="term" value="C:extracellular region"/>
    <property type="evidence" value="ECO:0007669"/>
    <property type="project" value="UniProtKB-SubCell"/>
</dbReference>
<dbReference type="GO" id="GO:0090729">
    <property type="term" value="F:toxin activity"/>
    <property type="evidence" value="ECO:0007669"/>
    <property type="project" value="UniProtKB-KW"/>
</dbReference>
<dbReference type="CDD" id="cd00206">
    <property type="entry name" value="TFP_snake_toxin"/>
    <property type="match status" value="1"/>
</dbReference>
<dbReference type="FunFam" id="2.10.60.10:FF:000024">
    <property type="entry name" value="Cytotoxin 1"/>
    <property type="match status" value="1"/>
</dbReference>
<dbReference type="Gene3D" id="2.10.60.10">
    <property type="entry name" value="CD59"/>
    <property type="match status" value="1"/>
</dbReference>
<dbReference type="InterPro" id="IPR003571">
    <property type="entry name" value="Snake_3FTx"/>
</dbReference>
<dbReference type="InterPro" id="IPR045860">
    <property type="entry name" value="Snake_toxin-like_sf"/>
</dbReference>
<dbReference type="InterPro" id="IPR018354">
    <property type="entry name" value="Snake_toxin_con_site"/>
</dbReference>
<dbReference type="InterPro" id="IPR054131">
    <property type="entry name" value="Toxin_cobra-type"/>
</dbReference>
<dbReference type="Pfam" id="PF21947">
    <property type="entry name" value="Toxin_cobra-type"/>
    <property type="match status" value="1"/>
</dbReference>
<dbReference type="SUPFAM" id="SSF57302">
    <property type="entry name" value="Snake toxin-like"/>
    <property type="match status" value="1"/>
</dbReference>
<dbReference type="PROSITE" id="PS00272">
    <property type="entry name" value="SNAKE_TOXIN"/>
    <property type="match status" value="1"/>
</dbReference>
<keyword id="KW-1015">Disulfide bond</keyword>
<keyword id="KW-1214">G-protein coupled acetylcholine receptor impairing toxin</keyword>
<keyword id="KW-1213">G-protein coupled receptor impairing toxin</keyword>
<keyword id="KW-0528">Neurotoxin</keyword>
<keyword id="KW-0629">Postsynaptic neurotoxin</keyword>
<keyword id="KW-0964">Secreted</keyword>
<keyword id="KW-0732">Signal</keyword>
<keyword id="KW-0800">Toxin</keyword>
<protein>
    <recommendedName>
        <fullName>Neurotoxin homolog NL1</fullName>
    </recommendedName>
</protein>
<organism>
    <name type="scientific">Naja atra</name>
    <name type="common">Chinese cobra</name>
    <dbReference type="NCBI Taxonomy" id="8656"/>
    <lineage>
        <taxon>Eukaryota</taxon>
        <taxon>Metazoa</taxon>
        <taxon>Chordata</taxon>
        <taxon>Craniata</taxon>
        <taxon>Vertebrata</taxon>
        <taxon>Euteleostomi</taxon>
        <taxon>Lepidosauria</taxon>
        <taxon>Squamata</taxon>
        <taxon>Bifurcata</taxon>
        <taxon>Unidentata</taxon>
        <taxon>Episquamata</taxon>
        <taxon>Toxicofera</taxon>
        <taxon>Serpentes</taxon>
        <taxon>Colubroidea</taxon>
        <taxon>Elapidae</taxon>
        <taxon>Elapinae</taxon>
        <taxon>Naja</taxon>
    </lineage>
</organism>